<proteinExistence type="inferred from homology"/>
<comment type="function">
    <text evidence="1">Catalyzes the transfer of a dimethylallyl group onto the adenine at position 37 in tRNAs that read codons beginning with uridine, leading to the formation of N6-(dimethylallyl)adenosine (i(6)A).</text>
</comment>
<comment type="catalytic activity">
    <reaction evidence="1">
        <text>adenosine(37) in tRNA + dimethylallyl diphosphate = N(6)-dimethylallyladenosine(37) in tRNA + diphosphate</text>
        <dbReference type="Rhea" id="RHEA:26482"/>
        <dbReference type="Rhea" id="RHEA-COMP:10162"/>
        <dbReference type="Rhea" id="RHEA-COMP:10375"/>
        <dbReference type="ChEBI" id="CHEBI:33019"/>
        <dbReference type="ChEBI" id="CHEBI:57623"/>
        <dbReference type="ChEBI" id="CHEBI:74411"/>
        <dbReference type="ChEBI" id="CHEBI:74415"/>
        <dbReference type="EC" id="2.5.1.75"/>
    </reaction>
</comment>
<comment type="cofactor">
    <cofactor evidence="1">
        <name>Mg(2+)</name>
        <dbReference type="ChEBI" id="CHEBI:18420"/>
    </cofactor>
</comment>
<comment type="subunit">
    <text evidence="1">Monomer.</text>
</comment>
<comment type="similarity">
    <text evidence="1">Belongs to the IPP transferase family.</text>
</comment>
<protein>
    <recommendedName>
        <fullName evidence="1">tRNA dimethylallyltransferase</fullName>
        <ecNumber evidence="1">2.5.1.75</ecNumber>
    </recommendedName>
    <alternativeName>
        <fullName evidence="1">Dimethylallyl diphosphate:tRNA dimethylallyltransferase</fullName>
        <shortName evidence="1">DMAPP:tRNA dimethylallyltransferase</shortName>
        <shortName evidence="1">DMATase</shortName>
    </alternativeName>
    <alternativeName>
        <fullName evidence="1">Isopentenyl-diphosphate:tRNA isopentenyltransferase</fullName>
        <shortName evidence="1">IPP transferase</shortName>
        <shortName evidence="1">IPPT</shortName>
        <shortName evidence="1">IPTase</shortName>
    </alternativeName>
</protein>
<organism>
    <name type="scientific">Heliobacterium modesticaldum (strain ATCC 51547 / Ice1)</name>
    <dbReference type="NCBI Taxonomy" id="498761"/>
    <lineage>
        <taxon>Bacteria</taxon>
        <taxon>Bacillati</taxon>
        <taxon>Bacillota</taxon>
        <taxon>Clostridia</taxon>
        <taxon>Eubacteriales</taxon>
        <taxon>Heliobacteriaceae</taxon>
        <taxon>Heliomicrobium</taxon>
    </lineage>
</organism>
<gene>
    <name evidence="1" type="primary">miaA</name>
    <name type="ordered locus">Helmi_24930</name>
    <name type="ORF">HM1_2581</name>
</gene>
<reference key="1">
    <citation type="journal article" date="2008" name="J. Bacteriol.">
        <title>The genome of Heliobacterium modesticaldum, a phototrophic representative of the Firmicutes containing the simplest photosynthetic apparatus.</title>
        <authorList>
            <person name="Sattley W.M."/>
            <person name="Madigan M.T."/>
            <person name="Swingley W.D."/>
            <person name="Cheung P.C."/>
            <person name="Clocksin K.M."/>
            <person name="Conrad A.L."/>
            <person name="Dejesa L.C."/>
            <person name="Honchak B.M."/>
            <person name="Jung D.O."/>
            <person name="Karbach L.E."/>
            <person name="Kurdoglu A."/>
            <person name="Lahiri S."/>
            <person name="Mastrian S.D."/>
            <person name="Page L.E."/>
            <person name="Taylor H.L."/>
            <person name="Wang Z.T."/>
            <person name="Raymond J."/>
            <person name="Chen M."/>
            <person name="Blankenship R.E."/>
            <person name="Touchman J.W."/>
        </authorList>
    </citation>
    <scope>NUCLEOTIDE SEQUENCE [LARGE SCALE GENOMIC DNA]</scope>
    <source>
        <strain>ATCC 51547 / Ice1</strain>
    </source>
</reference>
<accession>B0TB07</accession>
<feature type="chain" id="PRO_0000377189" description="tRNA dimethylallyltransferase">
    <location>
        <begin position="1"/>
        <end position="320"/>
    </location>
</feature>
<feature type="region of interest" description="Interaction with substrate tRNA" evidence="1">
    <location>
        <begin position="30"/>
        <end position="33"/>
    </location>
</feature>
<feature type="binding site" evidence="1">
    <location>
        <begin position="5"/>
        <end position="12"/>
    </location>
    <ligand>
        <name>ATP</name>
        <dbReference type="ChEBI" id="CHEBI:30616"/>
    </ligand>
</feature>
<feature type="binding site" evidence="1">
    <location>
        <begin position="7"/>
        <end position="12"/>
    </location>
    <ligand>
        <name>substrate</name>
    </ligand>
</feature>
<feature type="site" description="Interaction with substrate tRNA" evidence="1">
    <location>
        <position position="96"/>
    </location>
</feature>
<feature type="site" description="Interaction with substrate tRNA" evidence="1">
    <location>
        <position position="119"/>
    </location>
</feature>
<dbReference type="EC" id="2.5.1.75" evidence="1"/>
<dbReference type="EMBL" id="CP000930">
    <property type="protein sequence ID" value="ABZ85118.1"/>
    <property type="molecule type" value="Genomic_DNA"/>
</dbReference>
<dbReference type="SMR" id="B0TB07"/>
<dbReference type="STRING" id="498761.HM1_2581"/>
<dbReference type="KEGG" id="hmo:HM1_2581"/>
<dbReference type="eggNOG" id="COG0324">
    <property type="taxonomic scope" value="Bacteria"/>
</dbReference>
<dbReference type="HOGENOM" id="CLU_032616_0_1_9"/>
<dbReference type="OrthoDB" id="9776390at2"/>
<dbReference type="Proteomes" id="UP000008550">
    <property type="component" value="Chromosome"/>
</dbReference>
<dbReference type="GO" id="GO:0005524">
    <property type="term" value="F:ATP binding"/>
    <property type="evidence" value="ECO:0007669"/>
    <property type="project" value="UniProtKB-UniRule"/>
</dbReference>
<dbReference type="GO" id="GO:0052381">
    <property type="term" value="F:tRNA dimethylallyltransferase activity"/>
    <property type="evidence" value="ECO:0007669"/>
    <property type="project" value="UniProtKB-UniRule"/>
</dbReference>
<dbReference type="GO" id="GO:0006400">
    <property type="term" value="P:tRNA modification"/>
    <property type="evidence" value="ECO:0007669"/>
    <property type="project" value="TreeGrafter"/>
</dbReference>
<dbReference type="FunFam" id="1.10.20.140:FF:000001">
    <property type="entry name" value="tRNA dimethylallyltransferase"/>
    <property type="match status" value="1"/>
</dbReference>
<dbReference type="Gene3D" id="1.10.20.140">
    <property type="match status" value="1"/>
</dbReference>
<dbReference type="Gene3D" id="3.40.50.300">
    <property type="entry name" value="P-loop containing nucleotide triphosphate hydrolases"/>
    <property type="match status" value="1"/>
</dbReference>
<dbReference type="HAMAP" id="MF_00185">
    <property type="entry name" value="IPP_trans"/>
    <property type="match status" value="1"/>
</dbReference>
<dbReference type="InterPro" id="IPR039657">
    <property type="entry name" value="Dimethylallyltransferase"/>
</dbReference>
<dbReference type="InterPro" id="IPR018022">
    <property type="entry name" value="IPT"/>
</dbReference>
<dbReference type="InterPro" id="IPR027417">
    <property type="entry name" value="P-loop_NTPase"/>
</dbReference>
<dbReference type="NCBIfam" id="TIGR00174">
    <property type="entry name" value="miaA"/>
    <property type="match status" value="1"/>
</dbReference>
<dbReference type="PANTHER" id="PTHR11088">
    <property type="entry name" value="TRNA DIMETHYLALLYLTRANSFERASE"/>
    <property type="match status" value="1"/>
</dbReference>
<dbReference type="PANTHER" id="PTHR11088:SF60">
    <property type="entry name" value="TRNA DIMETHYLALLYLTRANSFERASE"/>
    <property type="match status" value="1"/>
</dbReference>
<dbReference type="Pfam" id="PF01715">
    <property type="entry name" value="IPPT"/>
    <property type="match status" value="1"/>
</dbReference>
<dbReference type="SUPFAM" id="SSF52540">
    <property type="entry name" value="P-loop containing nucleoside triphosphate hydrolases"/>
    <property type="match status" value="1"/>
</dbReference>
<sequence>MLIVGPTAVGKSDVGIAVARRFNGEIISGDSMQVYRGMDIGTAKLKQEERGGILHHMIDILDPDEPFSVADFQRRVTTLIPEIVNRGRLPILVGGTGLYVQSIIDHYEFTEEATDLELRSQLEQEADASGLEALHRRLAEVDPISAARIHVNDRKRIIRALEVYRLTGRRQSDFHYADSVRQPKYQLAPIALTMDRQELYRRIDLRARNMIESGLVEEVKGLLKGGYAPTLPSMQAIGYKEIVGYLQGEYDLARALYLLQRDTRHFAKRQYTWFRRDTRLIWFAADAMDRERLMEGIFDVVSNALGGHVERNINDGGAFR</sequence>
<keyword id="KW-0067">ATP-binding</keyword>
<keyword id="KW-0460">Magnesium</keyword>
<keyword id="KW-0547">Nucleotide-binding</keyword>
<keyword id="KW-1185">Reference proteome</keyword>
<keyword id="KW-0808">Transferase</keyword>
<keyword id="KW-0819">tRNA processing</keyword>
<evidence type="ECO:0000255" key="1">
    <source>
        <dbReference type="HAMAP-Rule" id="MF_00185"/>
    </source>
</evidence>
<name>MIAA_HELMI</name>